<comment type="function">
    <text evidence="1">Catalyzes the reversible conversion of ribose-5-phosphate to ribulose 5-phosphate.</text>
</comment>
<comment type="catalytic activity">
    <reaction evidence="1">
        <text>aldehydo-D-ribose 5-phosphate = D-ribulose 5-phosphate</text>
        <dbReference type="Rhea" id="RHEA:14657"/>
        <dbReference type="ChEBI" id="CHEBI:58121"/>
        <dbReference type="ChEBI" id="CHEBI:58273"/>
        <dbReference type="EC" id="5.3.1.6"/>
    </reaction>
</comment>
<comment type="pathway">
    <text evidence="1">Carbohydrate degradation; pentose phosphate pathway; D-ribose 5-phosphate from D-ribulose 5-phosphate (non-oxidative stage): step 1/1.</text>
</comment>
<comment type="subunit">
    <text evidence="1">Homodimer.</text>
</comment>
<comment type="similarity">
    <text evidence="1">Belongs to the ribose 5-phosphate isomerase family.</text>
</comment>
<reference key="1">
    <citation type="journal article" date="2011" name="PLoS Genet.">
        <title>The evolution of host specialization in the vertebrate gut symbiont Lactobacillus reuteri.</title>
        <authorList>
            <person name="Frese S.A."/>
            <person name="Benson A.K."/>
            <person name="Tannock G.W."/>
            <person name="Loach D.M."/>
            <person name="Kim J."/>
            <person name="Zhang M."/>
            <person name="Oh P.L."/>
            <person name="Heng N.C."/>
            <person name="Patil P.B."/>
            <person name="Juge N."/>
            <person name="Mackenzie D.A."/>
            <person name="Pearson B.M."/>
            <person name="Lapidus A."/>
            <person name="Dalin E."/>
            <person name="Tice H."/>
            <person name="Goltsman E."/>
            <person name="Land M."/>
            <person name="Hauser L."/>
            <person name="Ivanova N."/>
            <person name="Kyrpides N.C."/>
            <person name="Walter J."/>
        </authorList>
    </citation>
    <scope>NUCLEOTIDE SEQUENCE [LARGE SCALE GENOMIC DNA]</scope>
    <source>
        <strain>DSM 20016</strain>
    </source>
</reference>
<dbReference type="EC" id="5.3.1.6" evidence="1"/>
<dbReference type="EMBL" id="CP000705">
    <property type="protein sequence ID" value="ABQ82568.1"/>
    <property type="molecule type" value="Genomic_DNA"/>
</dbReference>
<dbReference type="RefSeq" id="WP_003666281.1">
    <property type="nucleotide sequence ID" value="NZ_AZDD01000008.1"/>
</dbReference>
<dbReference type="SMR" id="A5VI94"/>
<dbReference type="STRING" id="557436.Lreu_0298"/>
<dbReference type="KEGG" id="lre:Lreu_0298"/>
<dbReference type="PATRIC" id="fig|557436.17.peg.1915"/>
<dbReference type="eggNOG" id="COG0120">
    <property type="taxonomic scope" value="Bacteria"/>
</dbReference>
<dbReference type="HOGENOM" id="CLU_056590_1_0_9"/>
<dbReference type="UniPathway" id="UPA00115">
    <property type="reaction ID" value="UER00412"/>
</dbReference>
<dbReference type="Proteomes" id="UP000001991">
    <property type="component" value="Chromosome"/>
</dbReference>
<dbReference type="GO" id="GO:0004751">
    <property type="term" value="F:ribose-5-phosphate isomerase activity"/>
    <property type="evidence" value="ECO:0007669"/>
    <property type="project" value="UniProtKB-UniRule"/>
</dbReference>
<dbReference type="GO" id="GO:0009052">
    <property type="term" value="P:pentose-phosphate shunt, non-oxidative branch"/>
    <property type="evidence" value="ECO:0007669"/>
    <property type="project" value="UniProtKB-UniRule"/>
</dbReference>
<dbReference type="CDD" id="cd01398">
    <property type="entry name" value="RPI_A"/>
    <property type="match status" value="1"/>
</dbReference>
<dbReference type="FunFam" id="3.40.50.1360:FF:000001">
    <property type="entry name" value="Ribose-5-phosphate isomerase A"/>
    <property type="match status" value="1"/>
</dbReference>
<dbReference type="Gene3D" id="3.30.70.260">
    <property type="match status" value="1"/>
</dbReference>
<dbReference type="Gene3D" id="3.40.50.1360">
    <property type="match status" value="1"/>
</dbReference>
<dbReference type="HAMAP" id="MF_00170">
    <property type="entry name" value="Rib_5P_isom_A"/>
    <property type="match status" value="1"/>
</dbReference>
<dbReference type="InterPro" id="IPR037171">
    <property type="entry name" value="NagB/RpiA_transferase-like"/>
</dbReference>
<dbReference type="InterPro" id="IPR050262">
    <property type="entry name" value="Ribose-5P_isomerase"/>
</dbReference>
<dbReference type="InterPro" id="IPR020672">
    <property type="entry name" value="Ribose5P_isomerase_typA_subgr"/>
</dbReference>
<dbReference type="InterPro" id="IPR004788">
    <property type="entry name" value="Ribose5P_isomerase_type_A"/>
</dbReference>
<dbReference type="NCBIfam" id="NF001924">
    <property type="entry name" value="PRK00702.1"/>
    <property type="match status" value="1"/>
</dbReference>
<dbReference type="NCBIfam" id="TIGR00021">
    <property type="entry name" value="rpiA"/>
    <property type="match status" value="1"/>
</dbReference>
<dbReference type="PANTHER" id="PTHR43748">
    <property type="entry name" value="RIBOSE-5-PHOSPHATE ISOMERASE 3, CHLOROPLASTIC-RELATED"/>
    <property type="match status" value="1"/>
</dbReference>
<dbReference type="PANTHER" id="PTHR43748:SF3">
    <property type="entry name" value="RIBOSE-5-PHOSPHATE ISOMERASE 3, CHLOROPLASTIC-RELATED"/>
    <property type="match status" value="1"/>
</dbReference>
<dbReference type="Pfam" id="PF06026">
    <property type="entry name" value="Rib_5-P_isom_A"/>
    <property type="match status" value="1"/>
</dbReference>
<dbReference type="SUPFAM" id="SSF75445">
    <property type="entry name" value="D-ribose-5-phosphate isomerase (RpiA), lid domain"/>
    <property type="match status" value="1"/>
</dbReference>
<dbReference type="SUPFAM" id="SSF100950">
    <property type="entry name" value="NagB/RpiA/CoA transferase-like"/>
    <property type="match status" value="1"/>
</dbReference>
<proteinExistence type="inferred from homology"/>
<organism>
    <name type="scientific">Limosilactobacillus reuteri (strain DSM 20016)</name>
    <name type="common">Lactobacillus reuteri</name>
    <dbReference type="NCBI Taxonomy" id="557436"/>
    <lineage>
        <taxon>Bacteria</taxon>
        <taxon>Bacillati</taxon>
        <taxon>Bacillota</taxon>
        <taxon>Bacilli</taxon>
        <taxon>Lactobacillales</taxon>
        <taxon>Lactobacillaceae</taxon>
        <taxon>Limosilactobacillus</taxon>
    </lineage>
</organism>
<evidence type="ECO:0000255" key="1">
    <source>
        <dbReference type="HAMAP-Rule" id="MF_00170"/>
    </source>
</evidence>
<gene>
    <name evidence="1" type="primary">rpiA</name>
    <name type="ordered locus">Lreu_0298</name>
</gene>
<accession>A5VI94</accession>
<sequence>MDQNALKEQTGKESVKYIKSGMIVGLGTGSTVKYMVDELGKQVQEGKIKDIIGVTTSNRTAKQARDLGITIKDIDDVDHIDLTIDGADEISDDFQGIKGGGGALLWEKIVANASNKVMWIVDESKLVHKLGAFPLPVEVIPFGSQHVFDRLEKKGYKPTWRMDGDKKFRTDENNYIIDLHLGEIDDPKALADELIHMVGIVETGLFLNRVNDVIVGTPEGPKVLHAR</sequence>
<name>RPIA_LIMRD</name>
<protein>
    <recommendedName>
        <fullName evidence="1">Ribose-5-phosphate isomerase A</fullName>
        <ecNumber evidence="1">5.3.1.6</ecNumber>
    </recommendedName>
    <alternativeName>
        <fullName evidence="1">Phosphoriboisomerase A</fullName>
        <shortName evidence="1">PRI</shortName>
    </alternativeName>
</protein>
<feature type="chain" id="PRO_1000058300" description="Ribose-5-phosphate isomerase A">
    <location>
        <begin position="1"/>
        <end position="227"/>
    </location>
</feature>
<feature type="active site" description="Proton acceptor" evidence="1">
    <location>
        <position position="107"/>
    </location>
</feature>
<feature type="binding site" evidence="1">
    <location>
        <begin position="28"/>
        <end position="31"/>
    </location>
    <ligand>
        <name>substrate</name>
    </ligand>
</feature>
<feature type="binding site" evidence="1">
    <location>
        <begin position="85"/>
        <end position="88"/>
    </location>
    <ligand>
        <name>substrate</name>
    </ligand>
</feature>
<feature type="binding site" evidence="1">
    <location>
        <begin position="98"/>
        <end position="101"/>
    </location>
    <ligand>
        <name>substrate</name>
    </ligand>
</feature>
<feature type="binding site" evidence="1">
    <location>
        <position position="125"/>
    </location>
    <ligand>
        <name>substrate</name>
    </ligand>
</feature>
<keyword id="KW-0413">Isomerase</keyword>
<keyword id="KW-1185">Reference proteome</keyword>